<gene>
    <name type="primary">HMGB2</name>
    <name type="synonym">HMG2</name>
</gene>
<dbReference type="EMBL" id="BC109755">
    <property type="protein sequence ID" value="AAI09756.1"/>
    <property type="molecule type" value="mRNA"/>
</dbReference>
<dbReference type="RefSeq" id="NP_001032705.1">
    <property type="nucleotide sequence ID" value="NM_001037616.1"/>
</dbReference>
<dbReference type="SMR" id="P40673"/>
<dbReference type="FunCoup" id="P40673">
    <property type="interactions" value="2417"/>
</dbReference>
<dbReference type="STRING" id="9913.ENSBTAP00000020096"/>
<dbReference type="PaxDb" id="9913-ENSBTAP00000020096"/>
<dbReference type="PeptideAtlas" id="P40673"/>
<dbReference type="Ensembl" id="ENSBTAT00000020096.4">
    <property type="protein sequence ID" value="ENSBTAP00000020096.3"/>
    <property type="gene ID" value="ENSBTAG00000015101.4"/>
</dbReference>
<dbReference type="GeneID" id="540444"/>
<dbReference type="KEGG" id="bta:540444"/>
<dbReference type="CTD" id="3148"/>
<dbReference type="VEuPathDB" id="HostDB:ENSBTAG00000015101"/>
<dbReference type="eggNOG" id="KOG0381">
    <property type="taxonomic scope" value="Eukaryota"/>
</dbReference>
<dbReference type="GeneTree" id="ENSGT00940000154466"/>
<dbReference type="HOGENOM" id="CLU_082854_0_0_1"/>
<dbReference type="InParanoid" id="P40673"/>
<dbReference type="OMA" id="SHAFFGQ"/>
<dbReference type="OrthoDB" id="1919336at2759"/>
<dbReference type="TreeFam" id="TF105371"/>
<dbReference type="Reactome" id="R-BTA-140342">
    <property type="pathway name" value="Apoptosis induced DNA fragmentation"/>
</dbReference>
<dbReference type="Proteomes" id="UP000009136">
    <property type="component" value="Chromosome 8"/>
</dbReference>
<dbReference type="Bgee" id="ENSBTAG00000015101">
    <property type="expression patterns" value="Expressed in pharyngeal tonsil and 104 other cell types or tissues"/>
</dbReference>
<dbReference type="GO" id="GO:0000785">
    <property type="term" value="C:chromatin"/>
    <property type="evidence" value="ECO:0000250"/>
    <property type="project" value="AgBase"/>
</dbReference>
<dbReference type="GO" id="GO:0000793">
    <property type="term" value="C:condensed chromosome"/>
    <property type="evidence" value="ECO:0000250"/>
    <property type="project" value="AgBase"/>
</dbReference>
<dbReference type="GO" id="GO:0005737">
    <property type="term" value="C:cytoplasm"/>
    <property type="evidence" value="ECO:0000250"/>
    <property type="project" value="AgBase"/>
</dbReference>
<dbReference type="GO" id="GO:0005615">
    <property type="term" value="C:extracellular space"/>
    <property type="evidence" value="ECO:0000250"/>
    <property type="project" value="AgBase"/>
</dbReference>
<dbReference type="GO" id="GO:0005634">
    <property type="term" value="C:nucleus"/>
    <property type="evidence" value="ECO:0000250"/>
    <property type="project" value="AgBase"/>
</dbReference>
<dbReference type="GO" id="GO:0048471">
    <property type="term" value="C:perinuclear region of cytoplasm"/>
    <property type="evidence" value="ECO:0000250"/>
    <property type="project" value="AgBase"/>
</dbReference>
<dbReference type="GO" id="GO:0000987">
    <property type="term" value="F:cis-regulatory region sequence-specific DNA binding"/>
    <property type="evidence" value="ECO:0000250"/>
    <property type="project" value="AgBase"/>
</dbReference>
<dbReference type="GO" id="GO:0003684">
    <property type="term" value="F:damaged DNA binding"/>
    <property type="evidence" value="ECO:0000314"/>
    <property type="project" value="UniProtKB"/>
</dbReference>
<dbReference type="GO" id="GO:0008301">
    <property type="term" value="F:DNA binding, bending"/>
    <property type="evidence" value="ECO:0000314"/>
    <property type="project" value="UniProtKB"/>
</dbReference>
<dbReference type="GO" id="GO:0003690">
    <property type="term" value="F:double-stranded DNA binding"/>
    <property type="evidence" value="ECO:0000314"/>
    <property type="project" value="UniProtKB"/>
</dbReference>
<dbReference type="GO" id="GO:0000400">
    <property type="term" value="F:four-way junction DNA binding"/>
    <property type="evidence" value="ECO:0000250"/>
    <property type="project" value="AgBase"/>
</dbReference>
<dbReference type="GO" id="GO:0042393">
    <property type="term" value="F:histone binding"/>
    <property type="evidence" value="ECO:0000314"/>
    <property type="project" value="UniProtKB"/>
</dbReference>
<dbReference type="GO" id="GO:0044378">
    <property type="term" value="F:non-sequence-specific DNA binding, bending"/>
    <property type="evidence" value="ECO:0000250"/>
    <property type="project" value="AgBase"/>
</dbReference>
<dbReference type="GO" id="GO:0003697">
    <property type="term" value="F:single-stranded DNA binding"/>
    <property type="evidence" value="ECO:0000314"/>
    <property type="project" value="UniProtKB"/>
</dbReference>
<dbReference type="GO" id="GO:0097100">
    <property type="term" value="F:supercoiled DNA binding"/>
    <property type="evidence" value="ECO:0000250"/>
    <property type="project" value="AgBase"/>
</dbReference>
<dbReference type="GO" id="GO:0008134">
    <property type="term" value="F:transcription factor binding"/>
    <property type="evidence" value="ECO:0000250"/>
    <property type="project" value="AgBase"/>
</dbReference>
<dbReference type="GO" id="GO:0006935">
    <property type="term" value="P:chemotaxis"/>
    <property type="evidence" value="ECO:0007669"/>
    <property type="project" value="UniProtKB-KW"/>
</dbReference>
<dbReference type="GO" id="GO:0006338">
    <property type="term" value="P:chromatin remodeling"/>
    <property type="evidence" value="ECO:0000303"/>
    <property type="project" value="UniProtKB"/>
</dbReference>
<dbReference type="GO" id="GO:0050829">
    <property type="term" value="P:defense response to Gram-negative bacterium"/>
    <property type="evidence" value="ECO:0000250"/>
    <property type="project" value="AgBase"/>
</dbReference>
<dbReference type="GO" id="GO:0050830">
    <property type="term" value="P:defense response to Gram-positive bacterium"/>
    <property type="evidence" value="ECO:0000250"/>
    <property type="project" value="AgBase"/>
</dbReference>
<dbReference type="GO" id="GO:0032392">
    <property type="term" value="P:DNA geometric change"/>
    <property type="evidence" value="ECO:0000250"/>
    <property type="project" value="AgBase"/>
</dbReference>
<dbReference type="GO" id="GO:0006310">
    <property type="term" value="P:DNA recombination"/>
    <property type="evidence" value="ECO:0000314"/>
    <property type="project" value="UniProtKB"/>
</dbReference>
<dbReference type="GO" id="GO:0006265">
    <property type="term" value="P:DNA topological change"/>
    <property type="evidence" value="ECO:0000314"/>
    <property type="project" value="UniProtKB"/>
</dbReference>
<dbReference type="GO" id="GO:0002437">
    <property type="term" value="P:inflammatory response to antigenic stimulus"/>
    <property type="evidence" value="ECO:0000250"/>
    <property type="project" value="AgBase"/>
</dbReference>
<dbReference type="GO" id="GO:0045087">
    <property type="term" value="P:innate immune response"/>
    <property type="evidence" value="ECO:0007669"/>
    <property type="project" value="UniProtKB-KW"/>
</dbReference>
<dbReference type="GO" id="GO:0010629">
    <property type="term" value="P:negative regulation of gene expression"/>
    <property type="evidence" value="ECO:0000250"/>
    <property type="project" value="AgBase"/>
</dbReference>
<dbReference type="GO" id="GO:0010628">
    <property type="term" value="P:positive regulation of gene expression"/>
    <property type="evidence" value="ECO:0000250"/>
    <property type="project" value="AgBase"/>
</dbReference>
<dbReference type="GO" id="GO:0050767">
    <property type="term" value="P:regulation of neurogenesis"/>
    <property type="evidence" value="ECO:0000250"/>
    <property type="project" value="AgBase"/>
</dbReference>
<dbReference type="GO" id="GO:0072091">
    <property type="term" value="P:regulation of stem cell proliferation"/>
    <property type="evidence" value="ECO:0000250"/>
    <property type="project" value="AgBase"/>
</dbReference>
<dbReference type="GO" id="GO:0006357">
    <property type="term" value="P:regulation of transcription by RNA polymerase II"/>
    <property type="evidence" value="ECO:0000250"/>
    <property type="project" value="AgBase"/>
</dbReference>
<dbReference type="GO" id="GO:0032496">
    <property type="term" value="P:response to lipopolysaccharide"/>
    <property type="evidence" value="ECO:0000250"/>
    <property type="project" value="AgBase"/>
</dbReference>
<dbReference type="GO" id="GO:0033151">
    <property type="term" value="P:V(D)J recombination"/>
    <property type="evidence" value="ECO:0000314"/>
    <property type="project" value="UniProtKB"/>
</dbReference>
<dbReference type="CDD" id="cd21978">
    <property type="entry name" value="HMG-box_HMGB_rpt1"/>
    <property type="match status" value="1"/>
</dbReference>
<dbReference type="CDD" id="cd21979">
    <property type="entry name" value="HMG-box_HMGB_rpt2"/>
    <property type="match status" value="1"/>
</dbReference>
<dbReference type="FunFam" id="1.10.30.10:FF:000006">
    <property type="entry name" value="High mobility group protein B1"/>
    <property type="match status" value="1"/>
</dbReference>
<dbReference type="FunFam" id="1.10.30.10:FF:000018">
    <property type="entry name" value="High mobility group protein B2"/>
    <property type="match status" value="1"/>
</dbReference>
<dbReference type="Gene3D" id="1.10.30.10">
    <property type="entry name" value="High mobility group box domain"/>
    <property type="match status" value="2"/>
</dbReference>
<dbReference type="InterPro" id="IPR009071">
    <property type="entry name" value="HMG_box_dom"/>
</dbReference>
<dbReference type="InterPro" id="IPR036910">
    <property type="entry name" value="HMG_box_dom_sf"/>
</dbReference>
<dbReference type="InterPro" id="IPR017967">
    <property type="entry name" value="HMG_boxA_CS"/>
</dbReference>
<dbReference type="InterPro" id="IPR050342">
    <property type="entry name" value="HMGB"/>
</dbReference>
<dbReference type="PANTHER" id="PTHR48112:SF3">
    <property type="entry name" value="HIGH MOBILITY GROUP PROTEIN B2"/>
    <property type="match status" value="1"/>
</dbReference>
<dbReference type="PANTHER" id="PTHR48112">
    <property type="entry name" value="HIGH MOBILITY GROUP PROTEIN DSP1"/>
    <property type="match status" value="1"/>
</dbReference>
<dbReference type="Pfam" id="PF00505">
    <property type="entry name" value="HMG_box"/>
    <property type="match status" value="1"/>
</dbReference>
<dbReference type="Pfam" id="PF09011">
    <property type="entry name" value="HMG_box_2"/>
    <property type="match status" value="1"/>
</dbReference>
<dbReference type="PRINTS" id="PR00886">
    <property type="entry name" value="HIGHMOBLTY12"/>
</dbReference>
<dbReference type="SMART" id="SM00398">
    <property type="entry name" value="HMG"/>
    <property type="match status" value="2"/>
</dbReference>
<dbReference type="SUPFAM" id="SSF47095">
    <property type="entry name" value="HMG-box"/>
    <property type="match status" value="2"/>
</dbReference>
<dbReference type="PROSITE" id="PS00353">
    <property type="entry name" value="HMG_BOX_1"/>
    <property type="match status" value="1"/>
</dbReference>
<dbReference type="PROSITE" id="PS50118">
    <property type="entry name" value="HMG_BOX_2"/>
    <property type="match status" value="2"/>
</dbReference>
<organism>
    <name type="scientific">Bos taurus</name>
    <name type="common">Bovine</name>
    <dbReference type="NCBI Taxonomy" id="9913"/>
    <lineage>
        <taxon>Eukaryota</taxon>
        <taxon>Metazoa</taxon>
        <taxon>Chordata</taxon>
        <taxon>Craniata</taxon>
        <taxon>Vertebrata</taxon>
        <taxon>Euteleostomi</taxon>
        <taxon>Mammalia</taxon>
        <taxon>Eutheria</taxon>
        <taxon>Laurasiatheria</taxon>
        <taxon>Artiodactyla</taxon>
        <taxon>Ruminantia</taxon>
        <taxon>Pecora</taxon>
        <taxon>Bovidae</taxon>
        <taxon>Bovinae</taxon>
        <taxon>Bos</taxon>
    </lineage>
</organism>
<accession>P40673</accession>
<accession>Q32L56</accession>
<sequence length="209" mass="24034">MGKGDPNKPRGKMSSYAFFVQTCREEHKKKHPDSSVNFAEFSKKCSERWKTMSAKEKSKFEDMAKSDKARYDREMKNYVPPKGDKKGKKKDPNAPKRPPSAFFLFCSEHRPKIKSEHPGLSIGDTAKKLGEMWSEQSAKDKQPYEQKAAKLKEKYEKDIAAYRAKGKSEAGKKGPGRPTGSKKKNEPEDEEEEEEEEDEDEEEEDEDEE</sequence>
<protein>
    <recommendedName>
        <fullName>High mobility group protein B2</fullName>
    </recommendedName>
    <alternativeName>
        <fullName>High mobility group protein 2</fullName>
        <shortName>HMG-2</shortName>
    </alternativeName>
</protein>
<evidence type="ECO:0000250" key="1">
    <source>
        <dbReference type="UniProtKB" id="P09429"/>
    </source>
</evidence>
<evidence type="ECO:0000250" key="2">
    <source>
        <dbReference type="UniProtKB" id="P26583"/>
    </source>
</evidence>
<evidence type="ECO:0000250" key="3">
    <source>
        <dbReference type="UniProtKB" id="P30681"/>
    </source>
</evidence>
<evidence type="ECO:0000250" key="4">
    <source>
        <dbReference type="UniProtKB" id="P63158"/>
    </source>
</evidence>
<evidence type="ECO:0000250" key="5">
    <source>
        <dbReference type="UniProtKB" id="P63159"/>
    </source>
</evidence>
<evidence type="ECO:0000255" key="6">
    <source>
        <dbReference type="PROSITE-ProRule" id="PRU00267"/>
    </source>
</evidence>
<evidence type="ECO:0000256" key="7">
    <source>
        <dbReference type="SAM" id="MobiDB-lite"/>
    </source>
</evidence>
<evidence type="ECO:0000269" key="8">
    <source>
    </source>
</evidence>
<evidence type="ECO:0000269" key="9">
    <source>
    </source>
</evidence>
<evidence type="ECO:0000305" key="10"/>
<proteinExistence type="evidence at protein level"/>
<keyword id="KW-0007">Acetylation</keyword>
<keyword id="KW-0145">Chemotaxis</keyword>
<keyword id="KW-0158">Chromosome</keyword>
<keyword id="KW-0963">Cytoplasm</keyword>
<keyword id="KW-0903">Direct protein sequencing</keyword>
<keyword id="KW-1015">Disulfide bond</keyword>
<keyword id="KW-0233">DNA recombination</keyword>
<keyword id="KW-0238">DNA-binding</keyword>
<keyword id="KW-0391">Immunity</keyword>
<keyword id="KW-0395">Inflammatory response</keyword>
<keyword id="KW-0399">Innate immunity</keyword>
<keyword id="KW-0539">Nucleus</keyword>
<keyword id="KW-0558">Oxidation</keyword>
<keyword id="KW-0597">Phosphoprotein</keyword>
<keyword id="KW-1185">Reference proteome</keyword>
<keyword id="KW-0677">Repeat</keyword>
<keyword id="KW-0964">Secreted</keyword>
<keyword id="KW-0804">Transcription</keyword>
<keyword id="KW-0805">Transcription regulation</keyword>
<comment type="function">
    <text evidence="1 2 3 8">Multifunctional protein with various roles in different cellular compartments. May act in a redox sensitive manner. In the nucleus is an abundant chromatin-associated non-histone protein involved in transcription, chromatin remodeling and V(D)J recombination and probably other processes (By similarity). Binds DNA with a preference to non-canonical DNA structures such as single-stranded DNA. Can bent DNA and enhance DNA flexibility by looping thus providing a mechanism to promote activities on various gene promoters by enhancing transcription factor binding and/or bringing distant regulatory sequences into close proximity (PubMed:15256536). Involved in V(D)J recombination by acting as a cofactor of the RAG complex: acts by stimulating cleavage and RAG protein binding at the 23 bp spacer of conserved recombination signal sequences (RSS). Proposed to be involved in the innate immune response to nucleic acids by acting as a cytoplasmic promiscuous immunogenic DNA/RNA sensor which cooperates with subsequent discriminative sensing by specific pattern recognition receptors. In the extracellular compartment acts as a chemokine. Promotes proliferation and migration of endothelial cells implicating AGER/RAGE. Has antimicrobial activity in gastrointestinal epithelial tissues. Involved in inflammatory response to antigenic stimulus coupled with pro-inflammatory activity. May play a role in germ cell differentiation. Involved in modulation of neurogenesis probably by regulation of neural stem proliferation. Involved in articular cartilage surface maintenance implicating LEF1 and the Wnt/beta-catenin pathway (By similarity).</text>
</comment>
<comment type="subunit">
    <text evidence="2 3">Interacts with POU2F2, POU2F1 and POU3F1. Component of the RAG complex composed of core components RAG1 and RAG2, and associated component HMGB1 or HMGB2. Component of the SET complex, composed of at least ANP32A, APEX1, HMGB2, NME1, SET and TREX1. Directly interacts with SET. Interacts with LEF1.</text>
</comment>
<comment type="subcellular location">
    <subcellularLocation>
        <location evidence="2 6">Nucleus</location>
    </subcellularLocation>
    <subcellularLocation>
        <location evidence="2">Chromosome</location>
    </subcellularLocation>
    <subcellularLocation>
        <location evidence="2 3">Cytoplasm</location>
    </subcellularLocation>
    <subcellularLocation>
        <location evidence="2">Secreted</location>
    </subcellularLocation>
</comment>
<comment type="domain">
    <text evidence="2">Both, HMG box 1 and HMG box 2, show antimicrobial activity.</text>
</comment>
<comment type="PTM">
    <text evidence="1">Reduction/oxidation of cysteine residues Cys-23, Cys-45 and Cys-106 and a possible intramolecular disulfide bond involving Cys-23 and Cys-45 give rise to different redox forms with specific functional activities in various cellular compartments: 1- fully reduced HMGB2 (HMGB2C23hC45hC106h), 2- disulfide HMGB2 (HMGB2C23-C45C106h) and 3- sulfonyl HMGB2 (HMGB2C23soC45soC106so).</text>
</comment>
<comment type="similarity">
    <text evidence="10">Belongs to the HMGB family.</text>
</comment>
<name>HMGB2_BOVIN</name>
<feature type="initiator methionine" description="Removed" evidence="9">
    <location>
        <position position="1"/>
    </location>
</feature>
<feature type="chain" id="PRO_0000048533" description="High mobility group protein B2">
    <location>
        <begin position="2"/>
        <end position="209"/>
    </location>
</feature>
<feature type="DNA-binding region" description="HMG box 1" evidence="6">
    <location>
        <begin position="9"/>
        <end position="79"/>
    </location>
</feature>
<feature type="DNA-binding region" description="HMG box 2" evidence="6">
    <location>
        <begin position="95"/>
        <end position="163"/>
    </location>
</feature>
<feature type="region of interest" description="Disordered" evidence="7">
    <location>
        <begin position="52"/>
        <end position="150"/>
    </location>
</feature>
<feature type="region of interest" description="Disordered" evidence="7">
    <location>
        <begin position="162"/>
        <end position="209"/>
    </location>
</feature>
<feature type="region of interest" description="Required for chemotactic activity" evidence="2">
    <location>
        <begin position="165"/>
        <end position="180"/>
    </location>
</feature>
<feature type="compositionally biased region" description="Basic and acidic residues" evidence="7">
    <location>
        <begin position="52"/>
        <end position="76"/>
    </location>
</feature>
<feature type="compositionally biased region" description="Basic and acidic residues" evidence="7">
    <location>
        <begin position="107"/>
        <end position="117"/>
    </location>
</feature>
<feature type="compositionally biased region" description="Basic and acidic residues" evidence="7">
    <location>
        <begin position="137"/>
        <end position="150"/>
    </location>
</feature>
<feature type="compositionally biased region" description="Basic and acidic residues" evidence="7">
    <location>
        <begin position="162"/>
        <end position="172"/>
    </location>
</feature>
<feature type="compositionally biased region" description="Acidic residues" evidence="7">
    <location>
        <begin position="187"/>
        <end position="209"/>
    </location>
</feature>
<feature type="modified residue" description="N6-acetyllysine" evidence="5">
    <location>
        <position position="3"/>
    </location>
</feature>
<feature type="modified residue" description="Cysteine sulfonic acid (-SO3H); alternate" evidence="5">
    <location>
        <position position="23"/>
    </location>
</feature>
<feature type="modified residue" description="N6-acetyllysine" evidence="2">
    <location>
        <position position="30"/>
    </location>
</feature>
<feature type="modified residue" description="Phosphoserine" evidence="2">
    <location>
        <position position="35"/>
    </location>
</feature>
<feature type="modified residue" description="N6-acetyllysine" evidence="4">
    <location>
        <position position="43"/>
    </location>
</feature>
<feature type="modified residue" description="Cysteine sulfonic acid (-SO3H); alternate" evidence="5">
    <location>
        <position position="45"/>
    </location>
</feature>
<feature type="modified residue" description="N6-acetyllysine" evidence="4">
    <location>
        <position position="90"/>
    </location>
</feature>
<feature type="modified residue" description="Phosphoserine" evidence="1">
    <location>
        <position position="100"/>
    </location>
</feature>
<feature type="modified residue" description="Cysteine sulfonic acid (-SO3H)" evidence="5">
    <location>
        <position position="106"/>
    </location>
</feature>
<feature type="modified residue" description="N6-acetyllysine" evidence="3">
    <location>
        <position position="114"/>
    </location>
</feature>
<feature type="modified residue" description="N6-acetyllysine" evidence="4">
    <location>
        <position position="141"/>
    </location>
</feature>
<feature type="disulfide bond" description="In disulfide HMGB2; alternate" evidence="5">
    <location>
        <begin position="23"/>
        <end position="45"/>
    </location>
</feature>
<feature type="sequence conflict" description="In Ref. 2; AA sequence." evidence="10" ref="2">
    <original>S</original>
    <variation>A</variation>
    <location>
        <position position="34"/>
    </location>
</feature>
<reference key="1">
    <citation type="submission" date="2005-11" db="EMBL/GenBank/DDBJ databases">
        <authorList>
            <consortium name="NIH - Mammalian Gene Collection (MGC) project"/>
        </authorList>
    </citation>
    <scope>NUCLEOTIDE SEQUENCE [LARGE SCALE MRNA]</scope>
    <source>
        <strain>Crossbred X Angus</strain>
        <tissue>Liver</tissue>
    </source>
</reference>
<reference key="2">
    <citation type="journal article" date="1990" name="FEBS Lett.">
        <title>High mobility group proteins 1 and 2 bind preferentially to brominated poly(dG-dC).poly(dG-dC) in the Z-DNA conformation but not to other types of Z-DNA.</title>
        <authorList>
            <person name="Christen T."/>
            <person name="Bischoff M."/>
            <person name="Hobi R."/>
            <person name="Kuenzle C.C."/>
        </authorList>
    </citation>
    <scope>PROTEIN SEQUENCE OF 2-39</scope>
</reference>
<reference key="3">
    <citation type="journal article" date="2004" name="Mol. Endocrinol.">
        <title>High mobility group B proteins facilitate strong estrogen receptor binding to classical and half-site estrogen response elements and relax binding selectivity.</title>
        <authorList>
            <person name="Das D."/>
            <person name="Peterson R.C."/>
            <person name="Scovell W.M."/>
        </authorList>
    </citation>
    <scope>FUNCTION</scope>
</reference>